<protein>
    <recommendedName>
        <fullName evidence="1">Phosphonates import ATP-binding protein PhnC</fullName>
        <ecNumber evidence="1">7.3.2.2</ecNumber>
    </recommendedName>
</protein>
<gene>
    <name evidence="1" type="primary">phnC</name>
    <name type="ordered locus">Francci3_2156</name>
</gene>
<comment type="function">
    <text evidence="1">Part of the ABC transporter complex PhnCDE involved in phosphonates import. Responsible for energy coupling to the transport system.</text>
</comment>
<comment type="catalytic activity">
    <reaction evidence="1">
        <text>phosphonate(out) + ATP + H2O = phosphonate(in) + ADP + phosphate + H(+)</text>
        <dbReference type="Rhea" id="RHEA:18065"/>
        <dbReference type="ChEBI" id="CHEBI:15377"/>
        <dbReference type="ChEBI" id="CHEBI:15378"/>
        <dbReference type="ChEBI" id="CHEBI:16215"/>
        <dbReference type="ChEBI" id="CHEBI:30616"/>
        <dbReference type="ChEBI" id="CHEBI:43474"/>
        <dbReference type="ChEBI" id="CHEBI:456216"/>
        <dbReference type="EC" id="7.3.2.2"/>
    </reaction>
</comment>
<comment type="subunit">
    <text evidence="1">The complex is composed of two ATP-binding proteins (PhnC), two transmembrane proteins (PhnE) and a solute-binding protein (PhnD).</text>
</comment>
<comment type="subcellular location">
    <subcellularLocation>
        <location evidence="1">Cell membrane</location>
        <topology evidence="1">Peripheral membrane protein</topology>
    </subcellularLocation>
</comment>
<comment type="similarity">
    <text evidence="1">Belongs to the ABC transporter superfamily. Phosphonates importer (TC 3.A.1.9.1) family.</text>
</comment>
<accession>Q2JB14</accession>
<reference key="1">
    <citation type="journal article" date="2007" name="Genome Res.">
        <title>Genome characteristics of facultatively symbiotic Frankia sp. strains reflect host range and host plant biogeography.</title>
        <authorList>
            <person name="Normand P."/>
            <person name="Lapierre P."/>
            <person name="Tisa L.S."/>
            <person name="Gogarten J.P."/>
            <person name="Alloisio N."/>
            <person name="Bagnarol E."/>
            <person name="Bassi C.A."/>
            <person name="Berry A.M."/>
            <person name="Bickhart D.M."/>
            <person name="Choisne N."/>
            <person name="Couloux A."/>
            <person name="Cournoyer B."/>
            <person name="Cruveiller S."/>
            <person name="Daubin V."/>
            <person name="Demange N."/>
            <person name="Francino M.P."/>
            <person name="Goltsman E."/>
            <person name="Huang Y."/>
            <person name="Kopp O.R."/>
            <person name="Labarre L."/>
            <person name="Lapidus A."/>
            <person name="Lavire C."/>
            <person name="Marechal J."/>
            <person name="Martinez M."/>
            <person name="Mastronunzio J.E."/>
            <person name="Mullin B.C."/>
            <person name="Niemann J."/>
            <person name="Pujic P."/>
            <person name="Rawnsley T."/>
            <person name="Rouy Z."/>
            <person name="Schenowitz C."/>
            <person name="Sellstedt A."/>
            <person name="Tavares F."/>
            <person name="Tomkins J.P."/>
            <person name="Vallenet D."/>
            <person name="Valverde C."/>
            <person name="Wall L.G."/>
            <person name="Wang Y."/>
            <person name="Medigue C."/>
            <person name="Benson D.R."/>
        </authorList>
    </citation>
    <scope>NUCLEOTIDE SEQUENCE [LARGE SCALE GENOMIC DNA]</scope>
    <source>
        <strain>DSM 45818 / CECT 9043 / HFP020203 / CcI3</strain>
    </source>
</reference>
<keyword id="KW-0067">ATP-binding</keyword>
<keyword id="KW-1003">Cell membrane</keyword>
<keyword id="KW-0472">Membrane</keyword>
<keyword id="KW-0547">Nucleotide-binding</keyword>
<keyword id="KW-0918">Phosphonate transport</keyword>
<keyword id="KW-1185">Reference proteome</keyword>
<keyword id="KW-1278">Translocase</keyword>
<keyword id="KW-0813">Transport</keyword>
<evidence type="ECO:0000255" key="1">
    <source>
        <dbReference type="HAMAP-Rule" id="MF_01713"/>
    </source>
</evidence>
<sequence>MSAVRFEGVTKRFGQTLALDEVSFTVEPGEVVVLLGLSGSGKSTLLRHVDGLHGASAGRVIALGTDVGQARGARLRELRRRISFVFQQFHLVDSLSVLENVCTGALGRLRGLRLGLVTYPRAVRLEALEHLERVGLASQAFQRADTLSGGQQQRVAVARALMQRPEILLADEPVASLDPESSAQVMGLIREIASERNLTVLCSLHQVELALSWADRIVGLRSGQVVLDKAAGDLDHQQAVAMIYRAGPLRAIA</sequence>
<name>PHNC_FRACC</name>
<proteinExistence type="inferred from homology"/>
<dbReference type="EC" id="7.3.2.2" evidence="1"/>
<dbReference type="EMBL" id="CP000249">
    <property type="protein sequence ID" value="ABD11528.1"/>
    <property type="molecule type" value="Genomic_DNA"/>
</dbReference>
<dbReference type="RefSeq" id="WP_011436575.1">
    <property type="nucleotide sequence ID" value="NZ_LRTJ01000117.1"/>
</dbReference>
<dbReference type="SMR" id="Q2JB14"/>
<dbReference type="STRING" id="106370.Francci3_2156"/>
<dbReference type="KEGG" id="fra:Francci3_2156"/>
<dbReference type="eggNOG" id="COG3638">
    <property type="taxonomic scope" value="Bacteria"/>
</dbReference>
<dbReference type="HOGENOM" id="CLU_000604_1_22_11"/>
<dbReference type="OrthoDB" id="3190580at2"/>
<dbReference type="PhylomeDB" id="Q2JB14"/>
<dbReference type="Proteomes" id="UP000001937">
    <property type="component" value="Chromosome"/>
</dbReference>
<dbReference type="GO" id="GO:0005886">
    <property type="term" value="C:plasma membrane"/>
    <property type="evidence" value="ECO:0007669"/>
    <property type="project" value="UniProtKB-SubCell"/>
</dbReference>
<dbReference type="GO" id="GO:0015416">
    <property type="term" value="F:ABC-type phosphonate transporter activity"/>
    <property type="evidence" value="ECO:0007669"/>
    <property type="project" value="UniProtKB-EC"/>
</dbReference>
<dbReference type="GO" id="GO:0005524">
    <property type="term" value="F:ATP binding"/>
    <property type="evidence" value="ECO:0007669"/>
    <property type="project" value="UniProtKB-KW"/>
</dbReference>
<dbReference type="GO" id="GO:0016887">
    <property type="term" value="F:ATP hydrolysis activity"/>
    <property type="evidence" value="ECO:0007669"/>
    <property type="project" value="InterPro"/>
</dbReference>
<dbReference type="CDD" id="cd03256">
    <property type="entry name" value="ABC_PhnC_transporter"/>
    <property type="match status" value="1"/>
</dbReference>
<dbReference type="Gene3D" id="3.40.50.300">
    <property type="entry name" value="P-loop containing nucleotide triphosphate hydrolases"/>
    <property type="match status" value="1"/>
</dbReference>
<dbReference type="InterPro" id="IPR003593">
    <property type="entry name" value="AAA+_ATPase"/>
</dbReference>
<dbReference type="InterPro" id="IPR003439">
    <property type="entry name" value="ABC_transporter-like_ATP-bd"/>
</dbReference>
<dbReference type="InterPro" id="IPR017871">
    <property type="entry name" value="ABC_transporter-like_CS"/>
</dbReference>
<dbReference type="InterPro" id="IPR012693">
    <property type="entry name" value="ABC_transpr_PhnC"/>
</dbReference>
<dbReference type="InterPro" id="IPR050086">
    <property type="entry name" value="MetN_ABC_transporter-like"/>
</dbReference>
<dbReference type="InterPro" id="IPR027417">
    <property type="entry name" value="P-loop_NTPase"/>
</dbReference>
<dbReference type="NCBIfam" id="TIGR02315">
    <property type="entry name" value="ABC_phnC"/>
    <property type="match status" value="1"/>
</dbReference>
<dbReference type="PANTHER" id="PTHR43166">
    <property type="entry name" value="AMINO ACID IMPORT ATP-BINDING PROTEIN"/>
    <property type="match status" value="1"/>
</dbReference>
<dbReference type="PANTHER" id="PTHR43166:SF6">
    <property type="entry name" value="PHOSPHONATES IMPORT ATP-BINDING PROTEIN PHNC"/>
    <property type="match status" value="1"/>
</dbReference>
<dbReference type="Pfam" id="PF00005">
    <property type="entry name" value="ABC_tran"/>
    <property type="match status" value="1"/>
</dbReference>
<dbReference type="SMART" id="SM00382">
    <property type="entry name" value="AAA"/>
    <property type="match status" value="1"/>
</dbReference>
<dbReference type="SUPFAM" id="SSF52540">
    <property type="entry name" value="P-loop containing nucleoside triphosphate hydrolases"/>
    <property type="match status" value="1"/>
</dbReference>
<dbReference type="PROSITE" id="PS00211">
    <property type="entry name" value="ABC_TRANSPORTER_1"/>
    <property type="match status" value="1"/>
</dbReference>
<dbReference type="PROSITE" id="PS50893">
    <property type="entry name" value="ABC_TRANSPORTER_2"/>
    <property type="match status" value="1"/>
</dbReference>
<dbReference type="PROSITE" id="PS51249">
    <property type="entry name" value="PHNC"/>
    <property type="match status" value="1"/>
</dbReference>
<feature type="chain" id="PRO_0000274713" description="Phosphonates import ATP-binding protein PhnC">
    <location>
        <begin position="1"/>
        <end position="253"/>
    </location>
</feature>
<feature type="domain" description="ABC transporter" evidence="1">
    <location>
        <begin position="4"/>
        <end position="247"/>
    </location>
</feature>
<feature type="binding site" evidence="1">
    <location>
        <begin position="36"/>
        <end position="43"/>
    </location>
    <ligand>
        <name>ATP</name>
        <dbReference type="ChEBI" id="CHEBI:30616"/>
    </ligand>
</feature>
<organism>
    <name type="scientific">Frankia casuarinae (strain DSM 45818 / CECT 9043 / HFP020203 / CcI3)</name>
    <dbReference type="NCBI Taxonomy" id="106370"/>
    <lineage>
        <taxon>Bacteria</taxon>
        <taxon>Bacillati</taxon>
        <taxon>Actinomycetota</taxon>
        <taxon>Actinomycetes</taxon>
        <taxon>Frankiales</taxon>
        <taxon>Frankiaceae</taxon>
        <taxon>Frankia</taxon>
    </lineage>
</organism>